<accession>C5FJA5</accession>
<evidence type="ECO:0000250" key="1"/>
<evidence type="ECO:0000255" key="2"/>
<evidence type="ECO:0000255" key="3">
    <source>
        <dbReference type="PROSITE-ProRule" id="PRU01240"/>
    </source>
</evidence>
<evidence type="ECO:0000305" key="4"/>
<comment type="function">
    <text evidence="1">Secreted subtilisin-like serine protease with keratinolytic activity that contributes to pathogenicity.</text>
</comment>
<comment type="subcellular location">
    <subcellularLocation>
        <location evidence="1">Secreted</location>
    </subcellularLocation>
</comment>
<comment type="similarity">
    <text evidence="4">Belongs to the peptidase S8 family.</text>
</comment>
<sequence length="400" mass="41380">MGFITKAIPLALAAMSVVNGAEILETRAGVQTLADKYIVIMNDGVTEKAFDSHRSWVNRTHRRRLVRRGAKAMGGMKHTYKFPTGMKGYSGHFDEDMINQIAKHSDVKYIERDARVQINAITEQDNVPSWGLARVGSREAGGSTYYYDSTAGEGSTAYIIDTGTDIEHEEFEGRATWGSNFVDDMDMDCNGHGTHVSGTVGGATFGVAKKSNIVAVKVLDCNGSGSNSGVIMGMEWATNDAKKKGADKAVANMSLGGAFSQASNDAAAAIANGGVFLAVAAGNDNVDAANSSPASEPSICTVAASTEQDGKADFSNFGQVVDVYAPGDSITSAKPGGGSQVLSGTSMATPHVAGLAAYFIGLGMPGGPGLCDTIKQKAIDAIANPGAGTTGKLINNGSGK</sequence>
<protein>
    <recommendedName>
        <fullName>Subtilisin-like protease 7</fullName>
        <ecNumber>3.4.21.-</ecNumber>
    </recommendedName>
</protein>
<proteinExistence type="inferred from homology"/>
<dbReference type="EC" id="3.4.21.-"/>
<dbReference type="EMBL" id="DS995702">
    <property type="protein sequence ID" value="EEQ29526.1"/>
    <property type="molecule type" value="Genomic_DNA"/>
</dbReference>
<dbReference type="RefSeq" id="XP_002849411.1">
    <property type="nucleotide sequence ID" value="XM_002849365.1"/>
</dbReference>
<dbReference type="SMR" id="C5FJA5"/>
<dbReference type="STRING" id="554155.C5FJA5"/>
<dbReference type="GlyCosmos" id="C5FJA5">
    <property type="glycosylation" value="3 sites, No reported glycans"/>
</dbReference>
<dbReference type="GeneID" id="9226485"/>
<dbReference type="VEuPathDB" id="FungiDB:MCYG_02345"/>
<dbReference type="eggNOG" id="KOG1153">
    <property type="taxonomic scope" value="Eukaryota"/>
</dbReference>
<dbReference type="HOGENOM" id="CLU_011263_1_3_1"/>
<dbReference type="OMA" id="YWASPAS"/>
<dbReference type="OrthoDB" id="206201at2759"/>
<dbReference type="Proteomes" id="UP000002035">
    <property type="component" value="Unassembled WGS sequence"/>
</dbReference>
<dbReference type="GO" id="GO:0005576">
    <property type="term" value="C:extracellular region"/>
    <property type="evidence" value="ECO:0007669"/>
    <property type="project" value="UniProtKB-SubCell"/>
</dbReference>
<dbReference type="GO" id="GO:0004252">
    <property type="term" value="F:serine-type endopeptidase activity"/>
    <property type="evidence" value="ECO:0007669"/>
    <property type="project" value="InterPro"/>
</dbReference>
<dbReference type="GO" id="GO:0006508">
    <property type="term" value="P:proteolysis"/>
    <property type="evidence" value="ECO:0007669"/>
    <property type="project" value="UniProtKB-KW"/>
</dbReference>
<dbReference type="CDD" id="cd04077">
    <property type="entry name" value="Peptidases_S8_PCSK9_ProteinaseK_like"/>
    <property type="match status" value="1"/>
</dbReference>
<dbReference type="FunFam" id="3.40.50.200:FF:000014">
    <property type="entry name" value="Proteinase K"/>
    <property type="match status" value="1"/>
</dbReference>
<dbReference type="Gene3D" id="3.30.70.80">
    <property type="entry name" value="Peptidase S8 propeptide/proteinase inhibitor I9"/>
    <property type="match status" value="1"/>
</dbReference>
<dbReference type="Gene3D" id="3.40.50.200">
    <property type="entry name" value="Peptidase S8/S53 domain"/>
    <property type="match status" value="1"/>
</dbReference>
<dbReference type="InterPro" id="IPR034193">
    <property type="entry name" value="PCSK9_ProteinaseK-like"/>
</dbReference>
<dbReference type="InterPro" id="IPR000209">
    <property type="entry name" value="Peptidase_S8/S53_dom"/>
</dbReference>
<dbReference type="InterPro" id="IPR036852">
    <property type="entry name" value="Peptidase_S8/S53_dom_sf"/>
</dbReference>
<dbReference type="InterPro" id="IPR022398">
    <property type="entry name" value="Peptidase_S8_His-AS"/>
</dbReference>
<dbReference type="InterPro" id="IPR023828">
    <property type="entry name" value="Peptidase_S8_Ser-AS"/>
</dbReference>
<dbReference type="InterPro" id="IPR050131">
    <property type="entry name" value="Peptidase_S8_subtilisin-like"/>
</dbReference>
<dbReference type="InterPro" id="IPR015500">
    <property type="entry name" value="Peptidase_S8_subtilisin-rel"/>
</dbReference>
<dbReference type="InterPro" id="IPR010259">
    <property type="entry name" value="S8pro/Inhibitor_I9"/>
</dbReference>
<dbReference type="InterPro" id="IPR037045">
    <property type="entry name" value="S8pro/Inhibitor_I9_sf"/>
</dbReference>
<dbReference type="PANTHER" id="PTHR43806:SF11">
    <property type="entry name" value="CEREVISIN-RELATED"/>
    <property type="match status" value="1"/>
</dbReference>
<dbReference type="PANTHER" id="PTHR43806">
    <property type="entry name" value="PEPTIDASE S8"/>
    <property type="match status" value="1"/>
</dbReference>
<dbReference type="Pfam" id="PF05922">
    <property type="entry name" value="Inhibitor_I9"/>
    <property type="match status" value="1"/>
</dbReference>
<dbReference type="Pfam" id="PF00082">
    <property type="entry name" value="Peptidase_S8"/>
    <property type="match status" value="1"/>
</dbReference>
<dbReference type="PRINTS" id="PR00723">
    <property type="entry name" value="SUBTILISIN"/>
</dbReference>
<dbReference type="SUPFAM" id="SSF54897">
    <property type="entry name" value="Protease propeptides/inhibitors"/>
    <property type="match status" value="1"/>
</dbReference>
<dbReference type="SUPFAM" id="SSF52743">
    <property type="entry name" value="Subtilisin-like"/>
    <property type="match status" value="1"/>
</dbReference>
<dbReference type="PROSITE" id="PS51892">
    <property type="entry name" value="SUBTILASE"/>
    <property type="match status" value="1"/>
</dbReference>
<dbReference type="PROSITE" id="PS00137">
    <property type="entry name" value="SUBTILASE_HIS"/>
    <property type="match status" value="1"/>
</dbReference>
<dbReference type="PROSITE" id="PS00138">
    <property type="entry name" value="SUBTILASE_SER"/>
    <property type="match status" value="1"/>
</dbReference>
<gene>
    <name type="primary">SUB7</name>
    <name type="ORF">MCYG_02345</name>
</gene>
<reference key="1">
    <citation type="journal article" date="2012" name="MBio">
        <title>Comparative genome analysis of Trichophyton rubrum and related dermatophytes reveals candidate genes involved in infection.</title>
        <authorList>
            <person name="Martinez D.A."/>
            <person name="Oliver B.G."/>
            <person name="Graeser Y."/>
            <person name="Goldberg J.M."/>
            <person name="Li W."/>
            <person name="Martinez-Rossi N.M."/>
            <person name="Monod M."/>
            <person name="Shelest E."/>
            <person name="Barton R.C."/>
            <person name="Birch E."/>
            <person name="Brakhage A.A."/>
            <person name="Chen Z."/>
            <person name="Gurr S.J."/>
            <person name="Heiman D."/>
            <person name="Heitman J."/>
            <person name="Kosti I."/>
            <person name="Rossi A."/>
            <person name="Saif S."/>
            <person name="Samalova M."/>
            <person name="Saunders C.W."/>
            <person name="Shea T."/>
            <person name="Summerbell R.C."/>
            <person name="Xu J."/>
            <person name="Young S."/>
            <person name="Zeng Q."/>
            <person name="Birren B.W."/>
            <person name="Cuomo C.A."/>
            <person name="White T.C."/>
        </authorList>
    </citation>
    <scope>NUCLEOTIDE SEQUENCE [LARGE SCALE GENOMIC DNA]</scope>
    <source>
        <strain>ATCC MYA-4605 / CBS 113480</strain>
    </source>
</reference>
<name>SUB7_ARTOC</name>
<feature type="signal peptide" evidence="2">
    <location>
        <begin position="1"/>
        <end position="20"/>
    </location>
</feature>
<feature type="propeptide" id="PRO_0000384075" evidence="1">
    <location>
        <begin position="21"/>
        <end position="119"/>
    </location>
</feature>
<feature type="chain" id="PRO_0000384076" description="Subtilisin-like protease 7">
    <location>
        <begin position="120"/>
        <end position="400"/>
    </location>
</feature>
<feature type="domain" description="Inhibitor I9" evidence="2">
    <location>
        <begin position="36"/>
        <end position="118"/>
    </location>
</feature>
<feature type="domain" description="Peptidase S8" evidence="3">
    <location>
        <begin position="129"/>
        <end position="400"/>
    </location>
</feature>
<feature type="active site" description="Charge relay system" evidence="3">
    <location>
        <position position="161"/>
    </location>
</feature>
<feature type="active site" description="Charge relay system" evidence="3">
    <location>
        <position position="192"/>
    </location>
</feature>
<feature type="active site" description="Charge relay system" evidence="3">
    <location>
        <position position="346"/>
    </location>
</feature>
<feature type="glycosylation site" description="N-linked (GlcNAc...) asparagine" evidence="2">
    <location>
        <position position="222"/>
    </location>
</feature>
<feature type="glycosylation site" description="N-linked (GlcNAc...) asparagine" evidence="2">
    <location>
        <position position="252"/>
    </location>
</feature>
<feature type="glycosylation site" description="N-linked (GlcNAc...) asparagine" evidence="2">
    <location>
        <position position="396"/>
    </location>
</feature>
<organism>
    <name type="scientific">Arthroderma otae (strain ATCC MYA-4605 / CBS 113480)</name>
    <name type="common">Microsporum canis</name>
    <dbReference type="NCBI Taxonomy" id="554155"/>
    <lineage>
        <taxon>Eukaryota</taxon>
        <taxon>Fungi</taxon>
        <taxon>Dikarya</taxon>
        <taxon>Ascomycota</taxon>
        <taxon>Pezizomycotina</taxon>
        <taxon>Eurotiomycetes</taxon>
        <taxon>Eurotiomycetidae</taxon>
        <taxon>Onygenales</taxon>
        <taxon>Arthrodermataceae</taxon>
        <taxon>Microsporum</taxon>
    </lineage>
</organism>
<keyword id="KW-0325">Glycoprotein</keyword>
<keyword id="KW-0378">Hydrolase</keyword>
<keyword id="KW-0645">Protease</keyword>
<keyword id="KW-1185">Reference proteome</keyword>
<keyword id="KW-0964">Secreted</keyword>
<keyword id="KW-0720">Serine protease</keyword>
<keyword id="KW-0732">Signal</keyword>
<keyword id="KW-0843">Virulence</keyword>
<keyword id="KW-0865">Zymogen</keyword>